<organism>
    <name type="scientific">Bos taurus</name>
    <name type="common">Bovine</name>
    <dbReference type="NCBI Taxonomy" id="9913"/>
    <lineage>
        <taxon>Eukaryota</taxon>
        <taxon>Metazoa</taxon>
        <taxon>Chordata</taxon>
        <taxon>Craniata</taxon>
        <taxon>Vertebrata</taxon>
        <taxon>Euteleostomi</taxon>
        <taxon>Mammalia</taxon>
        <taxon>Eutheria</taxon>
        <taxon>Laurasiatheria</taxon>
        <taxon>Artiodactyla</taxon>
        <taxon>Ruminantia</taxon>
        <taxon>Pecora</taxon>
        <taxon>Bovidae</taxon>
        <taxon>Bovinae</taxon>
        <taxon>Bos</taxon>
    </lineage>
</organism>
<protein>
    <recommendedName>
        <fullName>Prostatic acid phosphatase</fullName>
        <ecNumber evidence="2">3.1.3.2</ecNumber>
    </recommendedName>
    <alternativeName>
        <fullName>Protein tyrosine phosphatase ACP3</fullName>
        <ecNumber evidence="2">3.1.3.48</ecNumber>
    </alternativeName>
</protein>
<proteinExistence type="evidence at transcript level"/>
<accession>A6H730</accession>
<dbReference type="EC" id="3.1.3.2" evidence="2"/>
<dbReference type="EC" id="3.1.3.48" evidence="2"/>
<dbReference type="EMBL" id="BC146093">
    <property type="protein sequence ID" value="AAI46094.1"/>
    <property type="molecule type" value="mRNA"/>
</dbReference>
<dbReference type="RefSeq" id="NP_001092336.1">
    <property type="nucleotide sequence ID" value="NM_001098866.1"/>
</dbReference>
<dbReference type="SMR" id="A6H730"/>
<dbReference type="FunCoup" id="A6H730">
    <property type="interactions" value="297"/>
</dbReference>
<dbReference type="STRING" id="9913.ENSBTAP00000069439"/>
<dbReference type="GlyCosmos" id="A6H730">
    <property type="glycosylation" value="3 sites, No reported glycans"/>
</dbReference>
<dbReference type="GlyGen" id="A6H730">
    <property type="glycosylation" value="3 sites"/>
</dbReference>
<dbReference type="PaxDb" id="9913-ENSBTAP00000015451"/>
<dbReference type="GeneID" id="504700"/>
<dbReference type="KEGG" id="bta:504700"/>
<dbReference type="CTD" id="55"/>
<dbReference type="VEuPathDB" id="HostDB:ENSBTAG00000011634"/>
<dbReference type="eggNOG" id="KOG3720">
    <property type="taxonomic scope" value="Eukaryota"/>
</dbReference>
<dbReference type="HOGENOM" id="CLU_030431_1_1_1"/>
<dbReference type="InParanoid" id="A6H730"/>
<dbReference type="OrthoDB" id="258392at2759"/>
<dbReference type="TreeFam" id="TF312893"/>
<dbReference type="Reactome" id="R-BTA-6798695">
    <property type="pathway name" value="Neutrophil degranulation"/>
</dbReference>
<dbReference type="Proteomes" id="UP000009136">
    <property type="component" value="Chromosome 1"/>
</dbReference>
<dbReference type="Bgee" id="ENSBTAG00000011634">
    <property type="expression patterns" value="Expressed in zone of skin and 53 other cell types or tissues"/>
</dbReference>
<dbReference type="GO" id="GO:0005615">
    <property type="term" value="C:extracellular space"/>
    <property type="evidence" value="ECO:0000250"/>
    <property type="project" value="CAFA"/>
</dbReference>
<dbReference type="GO" id="GO:0005886">
    <property type="term" value="C:plasma membrane"/>
    <property type="evidence" value="ECO:0000250"/>
    <property type="project" value="CAFA"/>
</dbReference>
<dbReference type="GO" id="GO:0012506">
    <property type="term" value="C:vesicle membrane"/>
    <property type="evidence" value="ECO:0000250"/>
    <property type="project" value="CAFA"/>
</dbReference>
<dbReference type="GO" id="GO:0008253">
    <property type="term" value="F:5'-nucleotidase activity"/>
    <property type="evidence" value="ECO:0000250"/>
    <property type="project" value="CAFA"/>
</dbReference>
<dbReference type="GO" id="GO:0003993">
    <property type="term" value="F:acid phosphatase activity"/>
    <property type="evidence" value="ECO:0000250"/>
    <property type="project" value="CAFA"/>
</dbReference>
<dbReference type="GO" id="GO:0052642">
    <property type="term" value="F:lysophosphatidic acid phosphatase activity"/>
    <property type="evidence" value="ECO:0000250"/>
    <property type="project" value="CAFA"/>
</dbReference>
<dbReference type="GO" id="GO:0016791">
    <property type="term" value="F:phosphatase activity"/>
    <property type="evidence" value="ECO:0000250"/>
    <property type="project" value="CAFA"/>
</dbReference>
<dbReference type="GO" id="GO:0004725">
    <property type="term" value="F:protein tyrosine phosphatase activity"/>
    <property type="evidence" value="ECO:0007669"/>
    <property type="project" value="UniProtKB-EC"/>
</dbReference>
<dbReference type="GO" id="GO:0042131">
    <property type="term" value="F:thiamine phosphate phosphatase activity"/>
    <property type="evidence" value="ECO:0000250"/>
    <property type="project" value="CAFA"/>
</dbReference>
<dbReference type="GO" id="GO:0046085">
    <property type="term" value="P:adenosine metabolic process"/>
    <property type="evidence" value="ECO:0000250"/>
    <property type="project" value="CAFA"/>
</dbReference>
<dbReference type="GO" id="GO:0006629">
    <property type="term" value="P:lipid metabolic process"/>
    <property type="evidence" value="ECO:0007669"/>
    <property type="project" value="UniProtKB-KW"/>
</dbReference>
<dbReference type="GO" id="GO:0060168">
    <property type="term" value="P:positive regulation of adenosine receptor signaling pathway"/>
    <property type="evidence" value="ECO:0000315"/>
    <property type="project" value="UniProtKB"/>
</dbReference>
<dbReference type="GO" id="GO:0051930">
    <property type="term" value="P:regulation of sensory perception of pain"/>
    <property type="evidence" value="ECO:0000314"/>
    <property type="project" value="UniProtKB"/>
</dbReference>
<dbReference type="GO" id="GO:0006772">
    <property type="term" value="P:thiamine metabolic process"/>
    <property type="evidence" value="ECO:0000250"/>
    <property type="project" value="CAFA"/>
</dbReference>
<dbReference type="CDD" id="cd07061">
    <property type="entry name" value="HP_HAP_like"/>
    <property type="match status" value="1"/>
</dbReference>
<dbReference type="FunFam" id="3.40.50.1240:FF:000010">
    <property type="entry name" value="Prostatic acid phosphatase"/>
    <property type="match status" value="1"/>
</dbReference>
<dbReference type="Gene3D" id="3.40.50.1240">
    <property type="entry name" value="Phosphoglycerate mutase-like"/>
    <property type="match status" value="1"/>
</dbReference>
<dbReference type="InterPro" id="IPR033379">
    <property type="entry name" value="Acid_Pase_AS"/>
</dbReference>
<dbReference type="InterPro" id="IPR000560">
    <property type="entry name" value="His_Pase_clade-2"/>
</dbReference>
<dbReference type="InterPro" id="IPR029033">
    <property type="entry name" value="His_PPase_superfam"/>
</dbReference>
<dbReference type="InterPro" id="IPR050645">
    <property type="entry name" value="Histidine_acid_phosphatase"/>
</dbReference>
<dbReference type="PANTHER" id="PTHR11567">
    <property type="entry name" value="ACID PHOSPHATASE-RELATED"/>
    <property type="match status" value="1"/>
</dbReference>
<dbReference type="PANTHER" id="PTHR11567:SF211">
    <property type="entry name" value="PROSTATIC ACID PHOSPHATASE"/>
    <property type="match status" value="1"/>
</dbReference>
<dbReference type="Pfam" id="PF00328">
    <property type="entry name" value="His_Phos_2"/>
    <property type="match status" value="1"/>
</dbReference>
<dbReference type="SUPFAM" id="SSF53254">
    <property type="entry name" value="Phosphoglycerate mutase-like"/>
    <property type="match status" value="1"/>
</dbReference>
<dbReference type="PROSITE" id="PS00616">
    <property type="entry name" value="HIS_ACID_PHOSPHAT_1"/>
    <property type="match status" value="1"/>
</dbReference>
<dbReference type="PROSITE" id="PS00778">
    <property type="entry name" value="HIS_ACID_PHOSPHAT_2"/>
    <property type="match status" value="1"/>
</dbReference>
<gene>
    <name type="primary">ACP3</name>
    <name type="synonym">ACPP</name>
</gene>
<evidence type="ECO:0000250" key="1"/>
<evidence type="ECO:0000250" key="2">
    <source>
        <dbReference type="UniProtKB" id="P15309"/>
    </source>
</evidence>
<evidence type="ECO:0000250" key="3">
    <source>
        <dbReference type="UniProtKB" id="P20646"/>
    </source>
</evidence>
<evidence type="ECO:0000255" key="4"/>
<evidence type="ECO:0000305" key="5"/>
<sequence length="387" mass="44622">MRNAALLMTRATSLRLSLLLLLSFLPDLDGGVRAKELRFVTLVFRHGDRSPIETFPNDPIKESSWPQGFGQLTQLGMAQHYELGQYIRKRYENFLNESYKREQVHVRSTDIDRTLMSAMTNLAALFPPEGISIWNPSLPWQPIPVHTVPVSEDQLLYLPFRNCPRFQELQSETLISEEFQKRLQPYKDFIEVLPKLTGYHDQDLLGIWSKVYDPLFCEGVHNFTLPSWATEDTMTKLKEISELSLLSLYGIHKQKEKSRLQGGVLINEILNHMKSATQPSNRRKLIMYSAHDTTVSGLQMALDVYNGILPPYASCHMMELYFQDGEYFVEMYYRNETRYEPHPLTLPGCTPSCPLAKFVELVAPVISQDWSMECAIRNHKGTEDIIN</sequence>
<keyword id="KW-1015">Disulfide bond</keyword>
<keyword id="KW-0325">Glycoprotein</keyword>
<keyword id="KW-0378">Hydrolase</keyword>
<keyword id="KW-0443">Lipid metabolism</keyword>
<keyword id="KW-1185">Reference proteome</keyword>
<keyword id="KW-0964">Secreted</keyword>
<keyword id="KW-0732">Signal</keyword>
<comment type="function">
    <text evidence="2">A non-specific tyrosine phosphatase that dephosphorylates a diverse number of substrates under acidic conditions (pH 4-6) including alkyl, aryl, and acyl orthophosphate monoesters and phosphorylated proteins. Has lipid phosphatase activity and inactivates lysophosphatidic acid in seminal plasma (By similarity).</text>
</comment>
<comment type="catalytic activity">
    <reaction evidence="2">
        <text>a phosphate monoester + H2O = an alcohol + phosphate</text>
        <dbReference type="Rhea" id="RHEA:15017"/>
        <dbReference type="ChEBI" id="CHEBI:15377"/>
        <dbReference type="ChEBI" id="CHEBI:30879"/>
        <dbReference type="ChEBI" id="CHEBI:43474"/>
        <dbReference type="ChEBI" id="CHEBI:67140"/>
        <dbReference type="EC" id="3.1.3.2"/>
    </reaction>
</comment>
<comment type="catalytic activity">
    <reaction evidence="2">
        <text>1-(9Z-octadecenoyl)-sn-glycero-3-phosphate + H2O = 1-(9Z-octadecenoyl)-sn-glycerol + phosphate</text>
        <dbReference type="Rhea" id="RHEA:39835"/>
        <dbReference type="ChEBI" id="CHEBI:15377"/>
        <dbReference type="ChEBI" id="CHEBI:43474"/>
        <dbReference type="ChEBI" id="CHEBI:74544"/>
        <dbReference type="ChEBI" id="CHEBI:75757"/>
    </reaction>
    <physiologicalReaction direction="left-to-right" evidence="2">
        <dbReference type="Rhea" id="RHEA:39836"/>
    </physiologicalReaction>
</comment>
<comment type="catalytic activity">
    <reaction evidence="2">
        <text>O-phospho-L-tyrosyl-[protein] + H2O = L-tyrosyl-[protein] + phosphate</text>
        <dbReference type="Rhea" id="RHEA:10684"/>
        <dbReference type="Rhea" id="RHEA-COMP:10136"/>
        <dbReference type="Rhea" id="RHEA-COMP:20101"/>
        <dbReference type="ChEBI" id="CHEBI:15377"/>
        <dbReference type="ChEBI" id="CHEBI:43474"/>
        <dbReference type="ChEBI" id="CHEBI:46858"/>
        <dbReference type="ChEBI" id="CHEBI:61978"/>
        <dbReference type="EC" id="3.1.3.48"/>
    </reaction>
</comment>
<comment type="subunit">
    <text evidence="3">Homodimer; dimer formation is required for phosphatase activity.</text>
</comment>
<comment type="subcellular location">
    <subcellularLocation>
        <location evidence="2">Secreted</location>
    </subcellularLocation>
</comment>
<comment type="similarity">
    <text evidence="5">Belongs to the histidine acid phosphatase family.</text>
</comment>
<feature type="signal peptide" evidence="2">
    <location>
        <begin position="1"/>
        <end position="34"/>
    </location>
</feature>
<feature type="chain" id="PRO_0000356292" description="Prostatic acid phosphatase">
    <location>
        <begin position="35"/>
        <end position="387"/>
    </location>
</feature>
<feature type="active site" description="Nucleophile" evidence="1">
    <location>
        <position position="46"/>
    </location>
</feature>
<feature type="active site" description="Proton donor" evidence="2">
    <location>
        <position position="292"/>
    </location>
</feature>
<feature type="binding site" evidence="2">
    <location>
        <position position="45"/>
    </location>
    <ligand>
        <name>substrate</name>
    </ligand>
</feature>
<feature type="binding site" evidence="2">
    <location>
        <position position="49"/>
    </location>
    <ligand>
        <name>substrate</name>
    </ligand>
</feature>
<feature type="binding site" evidence="3">
    <location>
        <position position="113"/>
    </location>
    <ligand>
        <name>substrate</name>
    </ligand>
</feature>
<feature type="binding site" evidence="3">
    <location>
        <position position="291"/>
    </location>
    <ligand>
        <name>substrate</name>
    </ligand>
</feature>
<feature type="site" description="Important for substrate specificity" evidence="1">
    <location>
        <position position="51"/>
    </location>
</feature>
<feature type="site" description="Required for dimerization" evidence="3">
    <location>
        <position position="140"/>
    </location>
</feature>
<feature type="site" description="Required for dimerization" evidence="3">
    <location>
        <position position="146"/>
    </location>
</feature>
<feature type="site" description="Required for structural stability" evidence="2">
    <location>
        <position position="208"/>
    </location>
</feature>
<feature type="glycosylation site" description="N-linked (GlcNAc...) asparagine" evidence="4">
    <location>
        <position position="96"/>
    </location>
</feature>
<feature type="glycosylation site" description="N-linked (GlcNAc...) asparagine" evidence="4">
    <location>
        <position position="222"/>
    </location>
</feature>
<feature type="glycosylation site" description="N-linked (GlcNAc...) asparagine" evidence="4">
    <location>
        <position position="335"/>
    </location>
</feature>
<feature type="disulfide bond" evidence="2">
    <location>
        <begin position="163"/>
        <end position="374"/>
    </location>
</feature>
<feature type="disulfide bond" evidence="2">
    <location>
        <begin position="217"/>
        <end position="315"/>
    </location>
</feature>
<feature type="disulfide bond" evidence="2">
    <location>
        <begin position="349"/>
        <end position="353"/>
    </location>
</feature>
<name>PPAP_BOVIN</name>
<reference key="1">
    <citation type="submission" date="2007-06" db="EMBL/GenBank/DDBJ databases">
        <authorList>
            <consortium name="NIH - Mammalian Gene Collection (MGC) project"/>
        </authorList>
    </citation>
    <scope>NUCLEOTIDE SEQUENCE [LARGE SCALE MRNA]</scope>
    <source>
        <strain>Hereford</strain>
        <tissue>Fetal skin</tissue>
    </source>
</reference>